<protein>
    <recommendedName>
        <fullName evidence="1">Flagellar P-ring protein</fullName>
    </recommendedName>
    <alternativeName>
        <fullName evidence="1">Basal body P-ring protein</fullName>
    </alternativeName>
</protein>
<sequence>MPARPIPVPAFALALALAAALAVPAPAAAARVKELADVVGVRENALYGYGLVVGLAGTGDSERVLFTQQSVAGMLGRLGIRIDPKDVRARNVAAVMVTARLPPFARPGTRIDVAVASMGNARSLAGGLLLVTPLAGGDGKVYAVGQGPVQVAGYDAGAGGAELRKNTPTSGRVAGGAAVERAVDFALGQAPLVLALRRPDLTTASRLAAAVNAKLGAGTARAVDPAAVELSPPPARKDDVVGFLAEIELLEVEADQRARVVVSERTGTVVAGEGVRLRPVAVAHGGLQVRVQRDPAVSQPAPFGAGRTVEATRDRAAATEAGGGVVALPATASVQDLARALDLLGASPRDLVAVLEAIRAAGALDAELEVLE</sequence>
<gene>
    <name evidence="1" type="primary">flgI</name>
    <name type="ordered locus">A2cp1_2605</name>
</gene>
<proteinExistence type="inferred from homology"/>
<comment type="function">
    <text evidence="1">Assembles around the rod to form the L-ring and probably protects the motor/basal body from shearing forces during rotation.</text>
</comment>
<comment type="subunit">
    <text evidence="1">The basal body constitutes a major portion of the flagellar organelle and consists of four rings (L,P,S, and M) mounted on a central rod.</text>
</comment>
<comment type="subcellular location">
    <subcellularLocation>
        <location evidence="1">Periplasm</location>
    </subcellularLocation>
    <subcellularLocation>
        <location evidence="1">Bacterial flagellum basal body</location>
    </subcellularLocation>
</comment>
<comment type="similarity">
    <text evidence="1">Belongs to the FlgI family.</text>
</comment>
<dbReference type="EMBL" id="CP001359">
    <property type="protein sequence ID" value="ACL65942.1"/>
    <property type="molecule type" value="Genomic_DNA"/>
</dbReference>
<dbReference type="RefSeq" id="WP_012633727.1">
    <property type="nucleotide sequence ID" value="NC_011891.1"/>
</dbReference>
<dbReference type="SMR" id="B8JD93"/>
<dbReference type="KEGG" id="acp:A2cp1_2605"/>
<dbReference type="HOGENOM" id="CLU_045235_1_0_7"/>
<dbReference type="Proteomes" id="UP000007089">
    <property type="component" value="Chromosome"/>
</dbReference>
<dbReference type="GO" id="GO:0009428">
    <property type="term" value="C:bacterial-type flagellum basal body, distal rod, P ring"/>
    <property type="evidence" value="ECO:0007669"/>
    <property type="project" value="InterPro"/>
</dbReference>
<dbReference type="GO" id="GO:0030288">
    <property type="term" value="C:outer membrane-bounded periplasmic space"/>
    <property type="evidence" value="ECO:0007669"/>
    <property type="project" value="InterPro"/>
</dbReference>
<dbReference type="GO" id="GO:0005198">
    <property type="term" value="F:structural molecule activity"/>
    <property type="evidence" value="ECO:0007669"/>
    <property type="project" value="InterPro"/>
</dbReference>
<dbReference type="GO" id="GO:0071973">
    <property type="term" value="P:bacterial-type flagellum-dependent cell motility"/>
    <property type="evidence" value="ECO:0007669"/>
    <property type="project" value="InterPro"/>
</dbReference>
<dbReference type="HAMAP" id="MF_00416">
    <property type="entry name" value="FlgI"/>
    <property type="match status" value="1"/>
</dbReference>
<dbReference type="InterPro" id="IPR001782">
    <property type="entry name" value="Flag_FlgI"/>
</dbReference>
<dbReference type="NCBIfam" id="NF003676">
    <property type="entry name" value="PRK05303.1"/>
    <property type="match status" value="1"/>
</dbReference>
<dbReference type="PANTHER" id="PTHR30381">
    <property type="entry name" value="FLAGELLAR P-RING PERIPLASMIC PROTEIN FLGI"/>
    <property type="match status" value="1"/>
</dbReference>
<dbReference type="PANTHER" id="PTHR30381:SF0">
    <property type="entry name" value="FLAGELLAR P-RING PROTEIN"/>
    <property type="match status" value="1"/>
</dbReference>
<dbReference type="Pfam" id="PF02119">
    <property type="entry name" value="FlgI"/>
    <property type="match status" value="1"/>
</dbReference>
<dbReference type="PRINTS" id="PR01010">
    <property type="entry name" value="FLGPRINGFLGI"/>
</dbReference>
<feature type="signal peptide" evidence="1">
    <location>
        <begin position="1"/>
        <end position="29"/>
    </location>
</feature>
<feature type="chain" id="PRO_5000432940" description="Flagellar P-ring protein">
    <location>
        <begin position="30"/>
        <end position="372"/>
    </location>
</feature>
<name>FLGI_ANAD2</name>
<accession>B8JD93</accession>
<reference key="1">
    <citation type="submission" date="2009-01" db="EMBL/GenBank/DDBJ databases">
        <title>Complete sequence of Anaeromyxobacter dehalogenans 2CP-1.</title>
        <authorList>
            <person name="Lucas S."/>
            <person name="Copeland A."/>
            <person name="Lapidus A."/>
            <person name="Glavina del Rio T."/>
            <person name="Dalin E."/>
            <person name="Tice H."/>
            <person name="Bruce D."/>
            <person name="Goodwin L."/>
            <person name="Pitluck S."/>
            <person name="Saunders E."/>
            <person name="Brettin T."/>
            <person name="Detter J.C."/>
            <person name="Han C."/>
            <person name="Larimer F."/>
            <person name="Land M."/>
            <person name="Hauser L."/>
            <person name="Kyrpides N."/>
            <person name="Ovchinnikova G."/>
            <person name="Beliaev A.S."/>
            <person name="Richardson P."/>
        </authorList>
    </citation>
    <scope>NUCLEOTIDE SEQUENCE [LARGE SCALE GENOMIC DNA]</scope>
    <source>
        <strain>2CP-1 / ATCC BAA-258</strain>
    </source>
</reference>
<keyword id="KW-0975">Bacterial flagellum</keyword>
<keyword id="KW-0574">Periplasm</keyword>
<keyword id="KW-0732">Signal</keyword>
<evidence type="ECO:0000255" key="1">
    <source>
        <dbReference type="HAMAP-Rule" id="MF_00416"/>
    </source>
</evidence>
<organism>
    <name type="scientific">Anaeromyxobacter dehalogenans (strain 2CP-1 / ATCC BAA-258)</name>
    <dbReference type="NCBI Taxonomy" id="455488"/>
    <lineage>
        <taxon>Bacteria</taxon>
        <taxon>Pseudomonadati</taxon>
        <taxon>Myxococcota</taxon>
        <taxon>Myxococcia</taxon>
        <taxon>Myxococcales</taxon>
        <taxon>Cystobacterineae</taxon>
        <taxon>Anaeromyxobacteraceae</taxon>
        <taxon>Anaeromyxobacter</taxon>
    </lineage>
</organism>